<sequence>MNILVLNGPNLDRLGKRQPEIYGRTTLADVEKLLVKRADALGVTVIVKQSNYEGELIDWVHEAADAGWPVIINPGGLTHTSVSLRDALAEIHDGAGFVEVHISNIHAREEFRHHSFLSPIARGVIAGLGVMGYELALEYLVLNSHS</sequence>
<organism>
    <name type="scientific">Corynebacterium pseudotuberculosis (strain C231)</name>
    <dbReference type="NCBI Taxonomy" id="681645"/>
    <lineage>
        <taxon>Bacteria</taxon>
        <taxon>Bacillati</taxon>
        <taxon>Actinomycetota</taxon>
        <taxon>Actinomycetes</taxon>
        <taxon>Mycobacteriales</taxon>
        <taxon>Corynebacteriaceae</taxon>
        <taxon>Corynebacterium</taxon>
    </lineage>
</organism>
<gene>
    <name type="primary">aroQ</name>
    <name type="ordered locus">CpC231_1137</name>
</gene>
<protein>
    <recommendedName>
        <fullName>3-dehydroquinate dehydratase</fullName>
        <shortName>3-dehydroquinase</shortName>
        <ecNumber>4.2.1.10</ecNumber>
    </recommendedName>
    <alternativeName>
        <fullName>Type II DHQase</fullName>
    </alternativeName>
</protein>
<evidence type="ECO:0000250" key="1"/>
<evidence type="ECO:0000305" key="2"/>
<comment type="function">
    <text evidence="1">Catalyzes a trans-dehydration via an enolate intermediate.</text>
</comment>
<comment type="catalytic activity">
    <reaction>
        <text>3-dehydroquinate = 3-dehydroshikimate + H2O</text>
        <dbReference type="Rhea" id="RHEA:21096"/>
        <dbReference type="ChEBI" id="CHEBI:15377"/>
        <dbReference type="ChEBI" id="CHEBI:16630"/>
        <dbReference type="ChEBI" id="CHEBI:32364"/>
        <dbReference type="EC" id="4.2.1.10"/>
    </reaction>
</comment>
<comment type="pathway">
    <text>Metabolic intermediate biosynthesis; chorismate biosynthesis; chorismate from D-erythrose 4-phosphate and phosphoenolpyruvate: step 3/7.</text>
</comment>
<comment type="subunit">
    <text evidence="1">Homododecamer.</text>
</comment>
<comment type="similarity">
    <text evidence="2">Belongs to the type-II 3-dehydroquinase family.</text>
</comment>
<reference key="1">
    <citation type="journal article" date="1997" name="Infect. Immun.">
        <title>Attenuation and vaccine potential of aroQ mutants of Corynebacterium pseudotuberculosis.</title>
        <authorList>
            <person name="Simmons C.P."/>
            <person name="Hodgson A.L.M."/>
            <person name="Strugnell R.A."/>
        </authorList>
    </citation>
    <scope>NUCLEOTIDE SEQUENCE [GENOMIC DNA]</scope>
    <source>
        <strain>C231</strain>
    </source>
</reference>
<reference key="2">
    <citation type="journal article" date="2011" name="PLoS ONE">
        <title>Evidence for reductive genome evolution and lateral acquisition of virulence functions in two Corynebacterium pseudotuberculosis strains.</title>
        <authorList>
            <person name="Ruiz J.C."/>
            <person name="D'Afonseca V."/>
            <person name="Silva A."/>
            <person name="Ali A."/>
            <person name="Pinto A.C."/>
            <person name="Santos A.R."/>
            <person name="Rocha A.A."/>
            <person name="Lopes D.O."/>
            <person name="Dorella F.A."/>
            <person name="Pacheco L.G."/>
            <person name="Costa M.P."/>
            <person name="Turk M.Z."/>
            <person name="Seyffert N."/>
            <person name="Moraes P.M."/>
            <person name="Soares S.C."/>
            <person name="Almeida S.S."/>
            <person name="Castro T.L."/>
            <person name="Abreu V.A."/>
            <person name="Trost E."/>
            <person name="Baumbach J."/>
            <person name="Tauch A."/>
            <person name="Schneider M.P."/>
            <person name="McCulloch J."/>
            <person name="Cerdeira L.T."/>
            <person name="Ramos R.T."/>
            <person name="Zerlotini A."/>
            <person name="Dominitini A."/>
            <person name="Resende D.M."/>
            <person name="Coser E.M."/>
            <person name="Oliveira L.M."/>
            <person name="Pedrosa A.L."/>
            <person name="Vieira C.U."/>
            <person name="Guimaraes C.T."/>
            <person name="Bartholomeu D.C."/>
            <person name="Oliveira D.M."/>
            <person name="Santos F.R."/>
            <person name="Rabelo E.M."/>
            <person name="Lobo F.P."/>
            <person name="Franco G.R."/>
            <person name="Costa A.F."/>
            <person name="Castro I.M."/>
            <person name="Dias S.R."/>
            <person name="Ferro J.A."/>
            <person name="Ortega J.M."/>
            <person name="Paiva L.V."/>
            <person name="Goulart L.R."/>
            <person name="Almeida J.F."/>
            <person name="Ferro M.I."/>
            <person name="Carneiro N.P."/>
            <person name="Falcao P.R."/>
            <person name="Grynberg P."/>
            <person name="Teixeira S.M."/>
            <person name="Brommonschenkel S."/>
            <person name="Oliveira S.C."/>
            <person name="Meyer R."/>
            <person name="Moore R.J."/>
            <person name="Miyoshi A."/>
            <person name="Oliveira G.C."/>
            <person name="Azevedo V."/>
        </authorList>
    </citation>
    <scope>NUCLEOTIDE SEQUENCE [LARGE SCALE GENOMIC DNA]</scope>
    <source>
        <strain>C231</strain>
    </source>
</reference>
<dbReference type="EC" id="4.2.1.10"/>
<dbReference type="EMBL" id="U88628">
    <property type="protein sequence ID" value="AAB71615.1"/>
    <property type="molecule type" value="Genomic_DNA"/>
</dbReference>
<dbReference type="EMBL" id="CP001829">
    <property type="protein sequence ID" value="ADL10613.1"/>
    <property type="molecule type" value="Genomic_DNA"/>
</dbReference>
<dbReference type="RefSeq" id="WP_013241997.1">
    <property type="nucleotide sequence ID" value="NC_017301.2"/>
</dbReference>
<dbReference type="SMR" id="P96750"/>
<dbReference type="STRING" id="681645.CpC231_1137"/>
<dbReference type="GeneID" id="93974509"/>
<dbReference type="KEGG" id="cpq:CPC231_05755"/>
<dbReference type="PATRIC" id="fig|681645.3.peg.1190"/>
<dbReference type="eggNOG" id="COG0757">
    <property type="taxonomic scope" value="Bacteria"/>
</dbReference>
<dbReference type="HOGENOM" id="CLU_090968_2_0_11"/>
<dbReference type="OrthoDB" id="9790793at2"/>
<dbReference type="UniPathway" id="UPA00053">
    <property type="reaction ID" value="UER00086"/>
</dbReference>
<dbReference type="Proteomes" id="UP000000276">
    <property type="component" value="Chromosome"/>
</dbReference>
<dbReference type="GO" id="GO:0003855">
    <property type="term" value="F:3-dehydroquinate dehydratase activity"/>
    <property type="evidence" value="ECO:0007669"/>
    <property type="project" value="UniProtKB-UniRule"/>
</dbReference>
<dbReference type="GO" id="GO:0008652">
    <property type="term" value="P:amino acid biosynthetic process"/>
    <property type="evidence" value="ECO:0007669"/>
    <property type="project" value="UniProtKB-KW"/>
</dbReference>
<dbReference type="GO" id="GO:0009073">
    <property type="term" value="P:aromatic amino acid family biosynthetic process"/>
    <property type="evidence" value="ECO:0007669"/>
    <property type="project" value="UniProtKB-KW"/>
</dbReference>
<dbReference type="GO" id="GO:0009423">
    <property type="term" value="P:chorismate biosynthetic process"/>
    <property type="evidence" value="ECO:0007669"/>
    <property type="project" value="UniProtKB-UniRule"/>
</dbReference>
<dbReference type="GO" id="GO:0019631">
    <property type="term" value="P:quinate catabolic process"/>
    <property type="evidence" value="ECO:0007669"/>
    <property type="project" value="TreeGrafter"/>
</dbReference>
<dbReference type="CDD" id="cd00466">
    <property type="entry name" value="DHQase_II"/>
    <property type="match status" value="1"/>
</dbReference>
<dbReference type="Gene3D" id="3.40.50.9100">
    <property type="entry name" value="Dehydroquinase, class II"/>
    <property type="match status" value="1"/>
</dbReference>
<dbReference type="HAMAP" id="MF_00169">
    <property type="entry name" value="AroQ"/>
    <property type="match status" value="1"/>
</dbReference>
<dbReference type="InterPro" id="IPR001874">
    <property type="entry name" value="DHquinase_II"/>
</dbReference>
<dbReference type="InterPro" id="IPR018509">
    <property type="entry name" value="DHquinase_II_CS"/>
</dbReference>
<dbReference type="InterPro" id="IPR036441">
    <property type="entry name" value="DHquinase_II_sf"/>
</dbReference>
<dbReference type="NCBIfam" id="TIGR01088">
    <property type="entry name" value="aroQ"/>
    <property type="match status" value="1"/>
</dbReference>
<dbReference type="NCBIfam" id="NF003805">
    <property type="entry name" value="PRK05395.1-2"/>
    <property type="match status" value="1"/>
</dbReference>
<dbReference type="NCBIfam" id="NF003806">
    <property type="entry name" value="PRK05395.1-3"/>
    <property type="match status" value="1"/>
</dbReference>
<dbReference type="NCBIfam" id="NF003807">
    <property type="entry name" value="PRK05395.1-4"/>
    <property type="match status" value="1"/>
</dbReference>
<dbReference type="PANTHER" id="PTHR21272">
    <property type="entry name" value="CATABOLIC 3-DEHYDROQUINASE"/>
    <property type="match status" value="1"/>
</dbReference>
<dbReference type="PANTHER" id="PTHR21272:SF3">
    <property type="entry name" value="CATABOLIC 3-DEHYDROQUINASE"/>
    <property type="match status" value="1"/>
</dbReference>
<dbReference type="Pfam" id="PF01220">
    <property type="entry name" value="DHquinase_II"/>
    <property type="match status" value="1"/>
</dbReference>
<dbReference type="PIRSF" id="PIRSF001399">
    <property type="entry name" value="DHquinase_II"/>
    <property type="match status" value="1"/>
</dbReference>
<dbReference type="SUPFAM" id="SSF52304">
    <property type="entry name" value="Type II 3-dehydroquinate dehydratase"/>
    <property type="match status" value="1"/>
</dbReference>
<dbReference type="PROSITE" id="PS01029">
    <property type="entry name" value="DEHYDROQUINASE_II"/>
    <property type="match status" value="1"/>
</dbReference>
<name>AROQ_CORP2</name>
<accession>P96750</accession>
<accession>D9QAN7</accession>
<keyword id="KW-0028">Amino-acid biosynthesis</keyword>
<keyword id="KW-0057">Aromatic amino acid biosynthesis</keyword>
<keyword id="KW-0456">Lyase</keyword>
<keyword id="KW-1185">Reference proteome</keyword>
<feature type="chain" id="PRO_0000159897" description="3-dehydroquinate dehydratase">
    <location>
        <begin position="1"/>
        <end position="146"/>
    </location>
</feature>
<feature type="active site" description="Proton acceptor" evidence="1">
    <location>
        <position position="22"/>
    </location>
</feature>
<feature type="active site" description="Proton donor" evidence="1">
    <location>
        <position position="101"/>
    </location>
</feature>
<feature type="binding site" evidence="1">
    <location>
        <position position="73"/>
    </location>
    <ligand>
        <name>substrate</name>
    </ligand>
</feature>
<feature type="binding site" evidence="1">
    <location>
        <position position="79"/>
    </location>
    <ligand>
        <name>substrate</name>
    </ligand>
</feature>
<feature type="binding site" evidence="1">
    <location>
        <position position="86"/>
    </location>
    <ligand>
        <name>substrate</name>
    </ligand>
</feature>
<feature type="binding site" evidence="1">
    <location>
        <begin position="102"/>
        <end position="103"/>
    </location>
    <ligand>
        <name>substrate</name>
    </ligand>
</feature>
<feature type="binding site" evidence="1">
    <location>
        <position position="112"/>
    </location>
    <ligand>
        <name>substrate</name>
    </ligand>
</feature>
<feature type="site" description="Transition state stabilizer" evidence="1">
    <location>
        <position position="17"/>
    </location>
</feature>
<feature type="sequence conflict" description="In Ref. 1; AAB71615." evidence="2" ref="1">
    <original>G</original>
    <variation>A</variation>
    <location>
        <position position="96"/>
    </location>
</feature>
<proteinExistence type="inferred from homology"/>